<dbReference type="EMBL" id="S66855">
    <property type="protein sequence ID" value="AAB28828.1"/>
    <property type="molecule type" value="mRNA"/>
</dbReference>
<dbReference type="EMBL" id="AL645478">
    <property type="status" value="NOT_ANNOTATED_CDS"/>
    <property type="molecule type" value="Genomic_DNA"/>
</dbReference>
<dbReference type="EMBL" id="CH466556">
    <property type="protein sequence ID" value="EDL16022.1"/>
    <property type="molecule type" value="Genomic_DNA"/>
</dbReference>
<dbReference type="EMBL" id="X64316">
    <property type="status" value="NOT_ANNOTATED_CDS"/>
    <property type="molecule type" value="Genomic_DNA"/>
</dbReference>
<dbReference type="EMBL" id="M34857">
    <property type="protein sequence ID" value="AAA37847.1"/>
    <property type="molecule type" value="mRNA"/>
</dbReference>
<dbReference type="CCDS" id="CCDS25292.1"/>
<dbReference type="PIR" id="A56572">
    <property type="entry name" value="A56572"/>
</dbReference>
<dbReference type="RefSeq" id="NP_032296.2">
    <property type="nucleotide sequence ID" value="NM_008270.2"/>
</dbReference>
<dbReference type="SMR" id="P20615"/>
<dbReference type="BioGRID" id="200383">
    <property type="interactions" value="2"/>
</dbReference>
<dbReference type="FunCoup" id="P20615">
    <property type="interactions" value="1310"/>
</dbReference>
<dbReference type="STRING" id="10090.ENSMUSP00000000010"/>
<dbReference type="iPTMnet" id="P20615"/>
<dbReference type="PhosphoSitePlus" id="P20615"/>
<dbReference type="PaxDb" id="10090-ENSMUSP00000000010"/>
<dbReference type="PeptideAtlas" id="P20615"/>
<dbReference type="ProteomicsDB" id="266930"/>
<dbReference type="Antibodypedia" id="17861">
    <property type="antibodies" value="325 antibodies from 33 providers"/>
</dbReference>
<dbReference type="DNASU" id="15417"/>
<dbReference type="Ensembl" id="ENSMUST00000000010.9">
    <property type="protein sequence ID" value="ENSMUSP00000000010.9"/>
    <property type="gene ID" value="ENSMUSG00000020875.10"/>
</dbReference>
<dbReference type="GeneID" id="15417"/>
<dbReference type="KEGG" id="mmu:15417"/>
<dbReference type="UCSC" id="uc007lbn.1">
    <property type="organism name" value="mouse"/>
</dbReference>
<dbReference type="AGR" id="MGI:96190"/>
<dbReference type="CTD" id="3219"/>
<dbReference type="MGI" id="MGI:96190">
    <property type="gene designation" value="Hoxb9"/>
</dbReference>
<dbReference type="VEuPathDB" id="HostDB:ENSMUSG00000020875"/>
<dbReference type="eggNOG" id="KOG0487">
    <property type="taxonomic scope" value="Eukaryota"/>
</dbReference>
<dbReference type="GeneTree" id="ENSGT00940000161386"/>
<dbReference type="HOGENOM" id="CLU_071854_1_0_1"/>
<dbReference type="InParanoid" id="P20615"/>
<dbReference type="OMA" id="EDSKDIC"/>
<dbReference type="OrthoDB" id="6159439at2759"/>
<dbReference type="PhylomeDB" id="P20615"/>
<dbReference type="TreeFam" id="TF317819"/>
<dbReference type="BioGRID-ORCS" id="15417">
    <property type="hits" value="1 hit in 78 CRISPR screens"/>
</dbReference>
<dbReference type="PRO" id="PR:P20615"/>
<dbReference type="Proteomes" id="UP000000589">
    <property type="component" value="Chromosome 11"/>
</dbReference>
<dbReference type="RNAct" id="P20615">
    <property type="molecule type" value="protein"/>
</dbReference>
<dbReference type="Bgee" id="ENSMUSG00000020875">
    <property type="expression patterns" value="Expressed in embryonic post-anal tail and 100 other cell types or tissues"/>
</dbReference>
<dbReference type="ExpressionAtlas" id="P20615">
    <property type="expression patterns" value="baseline and differential"/>
</dbReference>
<dbReference type="GO" id="GO:0005654">
    <property type="term" value="C:nucleoplasm"/>
    <property type="evidence" value="ECO:0007669"/>
    <property type="project" value="Ensembl"/>
</dbReference>
<dbReference type="GO" id="GO:0090575">
    <property type="term" value="C:RNA polymerase II transcription regulator complex"/>
    <property type="evidence" value="ECO:0000314"/>
    <property type="project" value="NTNU_SB"/>
</dbReference>
<dbReference type="GO" id="GO:0000981">
    <property type="term" value="F:DNA-binding transcription factor activity, RNA polymerase II-specific"/>
    <property type="evidence" value="ECO:0007669"/>
    <property type="project" value="InterPro"/>
</dbReference>
<dbReference type="GO" id="GO:1990837">
    <property type="term" value="F:sequence-specific double-stranded DNA binding"/>
    <property type="evidence" value="ECO:0007669"/>
    <property type="project" value="Ensembl"/>
</dbReference>
<dbReference type="GO" id="GO:0009952">
    <property type="term" value="P:anterior/posterior pattern specification"/>
    <property type="evidence" value="ECO:0000315"/>
    <property type="project" value="MGI"/>
</dbReference>
<dbReference type="GO" id="GO:0060326">
    <property type="term" value="P:cell chemotaxis"/>
    <property type="evidence" value="ECO:0007669"/>
    <property type="project" value="Ensembl"/>
</dbReference>
<dbReference type="GO" id="GO:0006351">
    <property type="term" value="P:DNA-templated transcription"/>
    <property type="evidence" value="ECO:0007669"/>
    <property type="project" value="InterPro"/>
</dbReference>
<dbReference type="GO" id="GO:0048706">
    <property type="term" value="P:embryonic skeletal system development"/>
    <property type="evidence" value="ECO:0000315"/>
    <property type="project" value="MGI"/>
</dbReference>
<dbReference type="GO" id="GO:0030879">
    <property type="term" value="P:mammary gland development"/>
    <property type="evidence" value="ECO:0000316"/>
    <property type="project" value="MGI"/>
</dbReference>
<dbReference type="GO" id="GO:0045944">
    <property type="term" value="P:positive regulation of transcription by RNA polymerase II"/>
    <property type="evidence" value="ECO:0000314"/>
    <property type="project" value="MGI"/>
</dbReference>
<dbReference type="CDD" id="cd00086">
    <property type="entry name" value="homeodomain"/>
    <property type="match status" value="1"/>
</dbReference>
<dbReference type="FunFam" id="1.10.10.60:FF:000018">
    <property type="entry name" value="Homeobox A10"/>
    <property type="match status" value="1"/>
</dbReference>
<dbReference type="Gene3D" id="1.10.10.60">
    <property type="entry name" value="Homeodomain-like"/>
    <property type="match status" value="1"/>
</dbReference>
<dbReference type="InterPro" id="IPR050803">
    <property type="entry name" value="Abd-B_homeobox_TF"/>
</dbReference>
<dbReference type="InterPro" id="IPR001356">
    <property type="entry name" value="HD"/>
</dbReference>
<dbReference type="InterPro" id="IPR020479">
    <property type="entry name" value="HD_metazoa"/>
</dbReference>
<dbReference type="InterPro" id="IPR017970">
    <property type="entry name" value="Homeobox_CS"/>
</dbReference>
<dbReference type="InterPro" id="IPR009057">
    <property type="entry name" value="Homeodomain-like_sf"/>
</dbReference>
<dbReference type="InterPro" id="IPR006711">
    <property type="entry name" value="Hox9_activation_N"/>
</dbReference>
<dbReference type="InterPro" id="IPR017112">
    <property type="entry name" value="HXA9/HXB9/HXC9"/>
</dbReference>
<dbReference type="PANTHER" id="PTHR45970">
    <property type="entry name" value="AGAP004664-PA"/>
    <property type="match status" value="1"/>
</dbReference>
<dbReference type="PANTHER" id="PTHR45970:SF5">
    <property type="entry name" value="HOMEOBOX PROTEIN HOX-B9"/>
    <property type="match status" value="1"/>
</dbReference>
<dbReference type="Pfam" id="PF00046">
    <property type="entry name" value="Homeodomain"/>
    <property type="match status" value="1"/>
</dbReference>
<dbReference type="Pfam" id="PF04617">
    <property type="entry name" value="Hox9_act"/>
    <property type="match status" value="1"/>
</dbReference>
<dbReference type="PIRSF" id="PIRSF037109">
    <property type="entry name" value="Homeobox_Hox9"/>
    <property type="match status" value="1"/>
</dbReference>
<dbReference type="PRINTS" id="PR00024">
    <property type="entry name" value="HOMEOBOX"/>
</dbReference>
<dbReference type="SMART" id="SM00389">
    <property type="entry name" value="HOX"/>
    <property type="match status" value="1"/>
</dbReference>
<dbReference type="SUPFAM" id="SSF46689">
    <property type="entry name" value="Homeodomain-like"/>
    <property type="match status" value="1"/>
</dbReference>
<dbReference type="PROSITE" id="PS00027">
    <property type="entry name" value="HOMEOBOX_1"/>
    <property type="match status" value="1"/>
</dbReference>
<dbReference type="PROSITE" id="PS50071">
    <property type="entry name" value="HOMEOBOX_2"/>
    <property type="match status" value="1"/>
</dbReference>
<comment type="function">
    <text>Sequence-specific transcription factor which is part of a developmental regulatory system that provides cells with specific positional identities on the anterior-posterior axis.</text>
</comment>
<comment type="subcellular location">
    <subcellularLocation>
        <location>Nucleus</location>
    </subcellularLocation>
</comment>
<comment type="similarity">
    <text evidence="4">Belongs to the Abd-B homeobox family.</text>
</comment>
<evidence type="ECO:0000250" key="1">
    <source>
        <dbReference type="UniProtKB" id="P17482"/>
    </source>
</evidence>
<evidence type="ECO:0000255" key="2">
    <source>
        <dbReference type="PROSITE-ProRule" id="PRU00108"/>
    </source>
</evidence>
<evidence type="ECO:0000256" key="3">
    <source>
        <dbReference type="SAM" id="MobiDB-lite"/>
    </source>
</evidence>
<evidence type="ECO:0000305" key="4"/>
<keyword id="KW-0217">Developmental protein</keyword>
<keyword id="KW-0238">DNA-binding</keyword>
<keyword id="KW-0371">Homeobox</keyword>
<keyword id="KW-1017">Isopeptide bond</keyword>
<keyword id="KW-0539">Nucleus</keyword>
<keyword id="KW-0597">Phosphoprotein</keyword>
<keyword id="KW-1185">Reference proteome</keyword>
<keyword id="KW-0804">Transcription</keyword>
<keyword id="KW-0805">Transcription regulation</keyword>
<keyword id="KW-0832">Ubl conjugation</keyword>
<feature type="chain" id="PRO_0000200156" description="Homeobox protein Hox-B9">
    <location>
        <begin position="1"/>
        <end position="250"/>
    </location>
</feature>
<feature type="DNA-binding region" description="Homeobox" evidence="2">
    <location>
        <begin position="185"/>
        <end position="244"/>
    </location>
</feature>
<feature type="region of interest" description="Disordered" evidence="3">
    <location>
        <begin position="21"/>
        <end position="48"/>
    </location>
</feature>
<feature type="region of interest" description="Disordered" evidence="3">
    <location>
        <begin position="160"/>
        <end position="182"/>
    </location>
</feature>
<feature type="compositionally biased region" description="Basic and acidic residues" evidence="3">
    <location>
        <begin position="160"/>
        <end position="171"/>
    </location>
</feature>
<feature type="modified residue" description="Phosphothreonine" evidence="1">
    <location>
        <position position="133"/>
    </location>
</feature>
<feature type="cross-link" description="Glycyl lysine isopeptide (Lys-Gly) (interchain with G-Cter in SUMO2)" evidence="1">
    <location>
        <position position="117"/>
    </location>
</feature>
<feature type="sequence conflict" description="In Ref. 1; AAB28828." evidence="4" ref="1">
    <original>S</original>
    <variation>T</variation>
    <location>
        <position position="62"/>
    </location>
</feature>
<feature type="sequence conflict" description="In Ref. 1; AAB28828 and 5; AAA37847." evidence="4" ref="1 5">
    <original>D</original>
    <variation>G</variation>
    <location>
        <position position="171"/>
    </location>
</feature>
<feature type="sequence conflict" description="In Ref. 5; AAA37847." evidence="4" ref="5">
    <original>KEQ</original>
    <variation>NGA</variation>
    <location>
        <begin position="245"/>
        <end position="247"/>
    </location>
</feature>
<name>HXB9_MOUSE</name>
<sequence>MSISGTLSSYYVDSIISHESEDAPPAKFPSGQYANPRQPGHAEHLDFPSCSFQPKAPVFGASWAPLSPHASGSLPSVYHPYLQPQGAPAAESRYLRTWLEPAPRAEAAPGQGQAAVKAEPLLGAPGELLKQGTPEYSLETSAGREAVLSNQRAGYGDNKICEGSEDKERPDQTNPSANWLHARSSRKKRCPYTKYQTLELEKEFLFNMYLTRDRRHEVARLLNLSERQVKIWFQNRRMKMKKMNKEQGKE</sequence>
<proteinExistence type="evidence at transcript level"/>
<organism>
    <name type="scientific">Mus musculus</name>
    <name type="common">Mouse</name>
    <dbReference type="NCBI Taxonomy" id="10090"/>
    <lineage>
        <taxon>Eukaryota</taxon>
        <taxon>Metazoa</taxon>
        <taxon>Chordata</taxon>
        <taxon>Craniata</taxon>
        <taxon>Vertebrata</taxon>
        <taxon>Euteleostomi</taxon>
        <taxon>Mammalia</taxon>
        <taxon>Eutheria</taxon>
        <taxon>Euarchontoglires</taxon>
        <taxon>Glires</taxon>
        <taxon>Rodentia</taxon>
        <taxon>Myomorpha</taxon>
        <taxon>Muroidea</taxon>
        <taxon>Muridae</taxon>
        <taxon>Murinae</taxon>
        <taxon>Mus</taxon>
        <taxon>Mus</taxon>
    </lineage>
</organism>
<protein>
    <recommendedName>
        <fullName>Homeobox protein Hox-B9</fullName>
    </recommendedName>
    <alternativeName>
        <fullName>Homeobox protein Hox-2.5</fullName>
    </alternativeName>
</protein>
<gene>
    <name type="primary">Hoxb9</name>
    <name type="synonym">Hox-2.5</name>
    <name type="synonym">Hoxb-9</name>
</gene>
<accession>P20615</accession>
<accession>A2A9Z6</accession>
<reference key="1">
    <citation type="journal article" date="1993" name="Mech. Dev.">
        <title>Functional analysis of the mouse homeobox gene HoxB9 in Drosophila development.</title>
        <authorList>
            <person name="Malicki J."/>
            <person name="Bogarad L.D."/>
            <person name="Martin M.M."/>
            <person name="Ruddle F.H."/>
            <person name="McGinnis W."/>
        </authorList>
    </citation>
    <scope>NUCLEOTIDE SEQUENCE [MRNA]</scope>
</reference>
<reference key="2">
    <citation type="journal article" date="2009" name="PLoS Biol.">
        <title>Lineage-specific biology revealed by a finished genome assembly of the mouse.</title>
        <authorList>
            <person name="Church D.M."/>
            <person name="Goodstadt L."/>
            <person name="Hillier L.W."/>
            <person name="Zody M.C."/>
            <person name="Goldstein S."/>
            <person name="She X."/>
            <person name="Bult C.J."/>
            <person name="Agarwala R."/>
            <person name="Cherry J.L."/>
            <person name="DiCuccio M."/>
            <person name="Hlavina W."/>
            <person name="Kapustin Y."/>
            <person name="Meric P."/>
            <person name="Maglott D."/>
            <person name="Birtle Z."/>
            <person name="Marques A.C."/>
            <person name="Graves T."/>
            <person name="Zhou S."/>
            <person name="Teague B."/>
            <person name="Potamousis K."/>
            <person name="Churas C."/>
            <person name="Place M."/>
            <person name="Herschleb J."/>
            <person name="Runnheim R."/>
            <person name="Forrest D."/>
            <person name="Amos-Landgraf J."/>
            <person name="Schwartz D.C."/>
            <person name="Cheng Z."/>
            <person name="Lindblad-Toh K."/>
            <person name="Eichler E.E."/>
            <person name="Ponting C.P."/>
        </authorList>
    </citation>
    <scope>NUCLEOTIDE SEQUENCE [LARGE SCALE GENOMIC DNA]</scope>
    <source>
        <strain>C57BL/6J</strain>
    </source>
</reference>
<reference key="3">
    <citation type="submission" date="2005-07" db="EMBL/GenBank/DDBJ databases">
        <authorList>
            <person name="Mural R.J."/>
            <person name="Adams M.D."/>
            <person name="Myers E.W."/>
            <person name="Smith H.O."/>
            <person name="Venter J.C."/>
        </authorList>
    </citation>
    <scope>NUCLEOTIDE SEQUENCE [LARGE SCALE GENOMIC DNA]</scope>
</reference>
<reference key="4">
    <citation type="journal article" date="1992" name="Nucleic Acids Res.">
        <title>The regulation of the murine Hox-2.5 gene expression during cell differentiation.</title>
        <authorList>
            <person name="Kondo T."/>
            <person name="Takahashi N."/>
            <person name="Muramatsu M."/>
        </authorList>
    </citation>
    <scope>NUCLEOTIDE SEQUENCE [GENOMIC DNA] OF 1-32</scope>
</reference>
<reference key="5">
    <citation type="journal article" date="1989" name="Dev. Biol.">
        <title>The developmental expression pattern of a new murine homeo box gene: Hox-2.5.</title>
        <authorList>
            <person name="Bogarad L.D."/>
            <person name="Utset M.F."/>
            <person name="Awgulewitsch A."/>
            <person name="Miki T."/>
            <person name="Hart C.P."/>
            <person name="Ruddle F.H."/>
        </authorList>
    </citation>
    <scope>NUCLEOTIDE SEQUENCE [MRNA] OF 124-250</scope>
</reference>
<reference key="6">
    <citation type="journal article" date="1989" name="Cell">
        <title>The murine and Drosophila homeobox gene complexes have common features of organization and expression.</title>
        <authorList>
            <person name="Graham A."/>
            <person name="Papalopulu N."/>
            <person name="Krumlauf R."/>
        </authorList>
    </citation>
    <scope>NUCLEOTIDE SEQUENCE OF 185-244</scope>
</reference>